<protein>
    <recommendedName>
        <fullName evidence="1">DNA gyrase inhibitor YacG</fullName>
    </recommendedName>
</protein>
<sequence>MSQPLTVDCPTCGAPVEWSEKNAFRPFCSDRCKLIDLGAWAAEEHKIAGSEESEDELYSGDLEPRH</sequence>
<comment type="function">
    <text evidence="1">Inhibits all the catalytic activities of DNA gyrase by preventing its interaction with DNA. Acts by binding directly to the C-terminal domain of GyrB, which probably disrupts DNA binding by the gyrase.</text>
</comment>
<comment type="cofactor">
    <cofactor evidence="1">
        <name>Zn(2+)</name>
        <dbReference type="ChEBI" id="CHEBI:29105"/>
    </cofactor>
    <text evidence="1">Binds 1 zinc ion.</text>
</comment>
<comment type="subunit">
    <text evidence="1">Interacts with GyrB.</text>
</comment>
<comment type="similarity">
    <text evidence="1">Belongs to the DNA gyrase inhibitor YacG family.</text>
</comment>
<accession>Q88Q66</accession>
<proteinExistence type="inferred from homology"/>
<feature type="chain" id="PRO_0000211716" description="DNA gyrase inhibitor YacG">
    <location>
        <begin position="1"/>
        <end position="66"/>
    </location>
</feature>
<feature type="region of interest" description="Disordered" evidence="2">
    <location>
        <begin position="45"/>
        <end position="66"/>
    </location>
</feature>
<feature type="binding site" evidence="1">
    <location>
        <position position="9"/>
    </location>
    <ligand>
        <name>Zn(2+)</name>
        <dbReference type="ChEBI" id="CHEBI:29105"/>
    </ligand>
</feature>
<feature type="binding site" evidence="1">
    <location>
        <position position="12"/>
    </location>
    <ligand>
        <name>Zn(2+)</name>
        <dbReference type="ChEBI" id="CHEBI:29105"/>
    </ligand>
</feature>
<feature type="binding site" evidence="1">
    <location>
        <position position="28"/>
    </location>
    <ligand>
        <name>Zn(2+)</name>
        <dbReference type="ChEBI" id="CHEBI:29105"/>
    </ligand>
</feature>
<feature type="binding site" evidence="1">
    <location>
        <position position="32"/>
    </location>
    <ligand>
        <name>Zn(2+)</name>
        <dbReference type="ChEBI" id="CHEBI:29105"/>
    </ligand>
</feature>
<keyword id="KW-0479">Metal-binding</keyword>
<keyword id="KW-1185">Reference proteome</keyword>
<keyword id="KW-0862">Zinc</keyword>
<name>YACG_PSEPK</name>
<organism>
    <name type="scientific">Pseudomonas putida (strain ATCC 47054 / DSM 6125 / CFBP 8728 / NCIMB 11950 / KT2440)</name>
    <dbReference type="NCBI Taxonomy" id="160488"/>
    <lineage>
        <taxon>Bacteria</taxon>
        <taxon>Pseudomonadati</taxon>
        <taxon>Pseudomonadota</taxon>
        <taxon>Gammaproteobacteria</taxon>
        <taxon>Pseudomonadales</taxon>
        <taxon>Pseudomonadaceae</taxon>
        <taxon>Pseudomonas</taxon>
    </lineage>
</organism>
<gene>
    <name evidence="1" type="primary">yacG</name>
    <name type="ordered locus">PP_0630</name>
</gene>
<dbReference type="EMBL" id="AE015451">
    <property type="protein sequence ID" value="AAN66255.1"/>
    <property type="molecule type" value="Genomic_DNA"/>
</dbReference>
<dbReference type="RefSeq" id="NP_742791.1">
    <property type="nucleotide sequence ID" value="NC_002947.4"/>
</dbReference>
<dbReference type="RefSeq" id="WP_010951889.1">
    <property type="nucleotide sequence ID" value="NZ_CP169744.1"/>
</dbReference>
<dbReference type="SMR" id="Q88Q66"/>
<dbReference type="STRING" id="160488.PP_0630"/>
<dbReference type="PaxDb" id="160488-PP_0630"/>
<dbReference type="GeneID" id="83677967"/>
<dbReference type="KEGG" id="ppu:PP_0630"/>
<dbReference type="PATRIC" id="fig|160488.4.peg.673"/>
<dbReference type="eggNOG" id="COG3024">
    <property type="taxonomic scope" value="Bacteria"/>
</dbReference>
<dbReference type="HOGENOM" id="CLU_178280_3_2_6"/>
<dbReference type="OrthoDB" id="9809663at2"/>
<dbReference type="PhylomeDB" id="Q88Q66"/>
<dbReference type="BioCyc" id="PPUT160488:G1G01-693-MONOMER"/>
<dbReference type="Proteomes" id="UP000000556">
    <property type="component" value="Chromosome"/>
</dbReference>
<dbReference type="GO" id="GO:0008657">
    <property type="term" value="F:DNA topoisomerase type II (double strand cut, ATP-hydrolyzing) inhibitor activity"/>
    <property type="evidence" value="ECO:0007669"/>
    <property type="project" value="UniProtKB-UniRule"/>
</dbReference>
<dbReference type="GO" id="GO:0008270">
    <property type="term" value="F:zinc ion binding"/>
    <property type="evidence" value="ECO:0007669"/>
    <property type="project" value="UniProtKB-UniRule"/>
</dbReference>
<dbReference type="GO" id="GO:0006355">
    <property type="term" value="P:regulation of DNA-templated transcription"/>
    <property type="evidence" value="ECO:0007669"/>
    <property type="project" value="InterPro"/>
</dbReference>
<dbReference type="Gene3D" id="3.30.50.10">
    <property type="entry name" value="Erythroid Transcription Factor GATA-1, subunit A"/>
    <property type="match status" value="1"/>
</dbReference>
<dbReference type="HAMAP" id="MF_00649">
    <property type="entry name" value="DNA_gyrase_inhibitor_YacG"/>
    <property type="match status" value="1"/>
</dbReference>
<dbReference type="InterPro" id="IPR005584">
    <property type="entry name" value="DNA_gyrase_inhibitor_YacG"/>
</dbReference>
<dbReference type="InterPro" id="IPR013088">
    <property type="entry name" value="Znf_NHR/GATA"/>
</dbReference>
<dbReference type="NCBIfam" id="NF001638">
    <property type="entry name" value="PRK00418.1"/>
    <property type="match status" value="1"/>
</dbReference>
<dbReference type="PANTHER" id="PTHR36150">
    <property type="entry name" value="DNA GYRASE INHIBITOR YACG"/>
    <property type="match status" value="1"/>
</dbReference>
<dbReference type="PANTHER" id="PTHR36150:SF1">
    <property type="entry name" value="DNA GYRASE INHIBITOR YACG"/>
    <property type="match status" value="1"/>
</dbReference>
<dbReference type="Pfam" id="PF03884">
    <property type="entry name" value="YacG"/>
    <property type="match status" value="1"/>
</dbReference>
<dbReference type="SUPFAM" id="SSF57716">
    <property type="entry name" value="Glucocorticoid receptor-like (DNA-binding domain)"/>
    <property type="match status" value="1"/>
</dbReference>
<evidence type="ECO:0000255" key="1">
    <source>
        <dbReference type="HAMAP-Rule" id="MF_00649"/>
    </source>
</evidence>
<evidence type="ECO:0000256" key="2">
    <source>
        <dbReference type="SAM" id="MobiDB-lite"/>
    </source>
</evidence>
<reference key="1">
    <citation type="journal article" date="2002" name="Environ. Microbiol.">
        <title>Complete genome sequence and comparative analysis of the metabolically versatile Pseudomonas putida KT2440.</title>
        <authorList>
            <person name="Nelson K.E."/>
            <person name="Weinel C."/>
            <person name="Paulsen I.T."/>
            <person name="Dodson R.J."/>
            <person name="Hilbert H."/>
            <person name="Martins dos Santos V.A.P."/>
            <person name="Fouts D.E."/>
            <person name="Gill S.R."/>
            <person name="Pop M."/>
            <person name="Holmes M."/>
            <person name="Brinkac L.M."/>
            <person name="Beanan M.J."/>
            <person name="DeBoy R.T."/>
            <person name="Daugherty S.C."/>
            <person name="Kolonay J.F."/>
            <person name="Madupu R."/>
            <person name="Nelson W.C."/>
            <person name="White O."/>
            <person name="Peterson J.D."/>
            <person name="Khouri H.M."/>
            <person name="Hance I."/>
            <person name="Chris Lee P."/>
            <person name="Holtzapple E.K."/>
            <person name="Scanlan D."/>
            <person name="Tran K."/>
            <person name="Moazzez A."/>
            <person name="Utterback T.R."/>
            <person name="Rizzo M."/>
            <person name="Lee K."/>
            <person name="Kosack D."/>
            <person name="Moestl D."/>
            <person name="Wedler H."/>
            <person name="Lauber J."/>
            <person name="Stjepandic D."/>
            <person name="Hoheisel J."/>
            <person name="Straetz M."/>
            <person name="Heim S."/>
            <person name="Kiewitz C."/>
            <person name="Eisen J.A."/>
            <person name="Timmis K.N."/>
            <person name="Duesterhoeft A."/>
            <person name="Tuemmler B."/>
            <person name="Fraser C.M."/>
        </authorList>
    </citation>
    <scope>NUCLEOTIDE SEQUENCE [LARGE SCALE GENOMIC DNA]</scope>
    <source>
        <strain>ATCC 47054 / DSM 6125 / CFBP 8728 / NCIMB 11950 / KT2440</strain>
    </source>
</reference>